<organism>
    <name type="scientific">Helicobacter hepaticus (strain ATCC 51449 / 3B1)</name>
    <dbReference type="NCBI Taxonomy" id="235279"/>
    <lineage>
        <taxon>Bacteria</taxon>
        <taxon>Pseudomonadati</taxon>
        <taxon>Campylobacterota</taxon>
        <taxon>Epsilonproteobacteria</taxon>
        <taxon>Campylobacterales</taxon>
        <taxon>Helicobacteraceae</taxon>
        <taxon>Helicobacter</taxon>
    </lineage>
</organism>
<comment type="function">
    <text evidence="1">Prevents the cell division inhibition by proteins MinC and MinD at internal division sites while permitting inhibition at polar sites. This ensures cell division at the proper site by restricting the formation of a division septum at the midpoint of the long axis of the cell.</text>
</comment>
<comment type="similarity">
    <text evidence="1">Belongs to the MinE family.</text>
</comment>
<keyword id="KW-0131">Cell cycle</keyword>
<keyword id="KW-0132">Cell division</keyword>
<keyword id="KW-1185">Reference proteome</keyword>
<sequence length="78" mass="8882">MSLLGMFGHSSQKSATLARERLKLVLSHERTANIPYLEDMQKEILQVVQKYTRSSKIEFSTNSNQNINTLEVEITLGN</sequence>
<dbReference type="EMBL" id="AE017125">
    <property type="protein sequence ID" value="AAP77821.1"/>
    <property type="molecule type" value="Genomic_DNA"/>
</dbReference>
<dbReference type="RefSeq" id="WP_011116064.1">
    <property type="nucleotide sequence ID" value="NC_004917.1"/>
</dbReference>
<dbReference type="SMR" id="Q7VGU6"/>
<dbReference type="STRING" id="235279.HH_1224"/>
<dbReference type="KEGG" id="hhe:HH_1224"/>
<dbReference type="eggNOG" id="COG0851">
    <property type="taxonomic scope" value="Bacteria"/>
</dbReference>
<dbReference type="HOGENOM" id="CLU_137929_2_1_7"/>
<dbReference type="OrthoDB" id="9802655at2"/>
<dbReference type="Proteomes" id="UP000002495">
    <property type="component" value="Chromosome"/>
</dbReference>
<dbReference type="GO" id="GO:0051301">
    <property type="term" value="P:cell division"/>
    <property type="evidence" value="ECO:0007669"/>
    <property type="project" value="UniProtKB-KW"/>
</dbReference>
<dbReference type="GO" id="GO:0032955">
    <property type="term" value="P:regulation of division septum assembly"/>
    <property type="evidence" value="ECO:0007669"/>
    <property type="project" value="InterPro"/>
</dbReference>
<dbReference type="Gene3D" id="3.30.1070.10">
    <property type="entry name" value="Cell division topological specificity factor MinE"/>
    <property type="match status" value="1"/>
</dbReference>
<dbReference type="HAMAP" id="MF_00262">
    <property type="entry name" value="MinE"/>
    <property type="match status" value="1"/>
</dbReference>
<dbReference type="InterPro" id="IPR005527">
    <property type="entry name" value="MinE"/>
</dbReference>
<dbReference type="InterPro" id="IPR036707">
    <property type="entry name" value="MinE_sf"/>
</dbReference>
<dbReference type="NCBIfam" id="TIGR01215">
    <property type="entry name" value="minE"/>
    <property type="match status" value="1"/>
</dbReference>
<dbReference type="NCBIfam" id="NF001422">
    <property type="entry name" value="PRK00296.1"/>
    <property type="match status" value="1"/>
</dbReference>
<dbReference type="Pfam" id="PF03776">
    <property type="entry name" value="MinE"/>
    <property type="match status" value="1"/>
</dbReference>
<dbReference type="SUPFAM" id="SSF55229">
    <property type="entry name" value="Cell division protein MinE topological specificity domain"/>
    <property type="match status" value="1"/>
</dbReference>
<feature type="chain" id="PRO_0000298127" description="Cell division topological specificity factor">
    <location>
        <begin position="1"/>
        <end position="78"/>
    </location>
</feature>
<proteinExistence type="inferred from homology"/>
<name>MINE_HELHP</name>
<protein>
    <recommendedName>
        <fullName evidence="1">Cell division topological specificity factor</fullName>
    </recommendedName>
</protein>
<gene>
    <name evidence="1" type="primary">minE</name>
    <name type="ordered locus">HH_1224</name>
</gene>
<accession>Q7VGU6</accession>
<evidence type="ECO:0000255" key="1">
    <source>
        <dbReference type="HAMAP-Rule" id="MF_00262"/>
    </source>
</evidence>
<reference key="1">
    <citation type="journal article" date="2003" name="Proc. Natl. Acad. Sci. U.S.A.">
        <title>The complete genome sequence of the carcinogenic bacterium Helicobacter hepaticus.</title>
        <authorList>
            <person name="Suerbaum S."/>
            <person name="Josenhans C."/>
            <person name="Sterzenbach T."/>
            <person name="Drescher B."/>
            <person name="Brandt P."/>
            <person name="Bell M."/>
            <person name="Droege M."/>
            <person name="Fartmann B."/>
            <person name="Fischer H.-P."/>
            <person name="Ge Z."/>
            <person name="Hoerster A."/>
            <person name="Holland R."/>
            <person name="Klein K."/>
            <person name="Koenig J."/>
            <person name="Macko L."/>
            <person name="Mendz G.L."/>
            <person name="Nyakatura G."/>
            <person name="Schauer D.B."/>
            <person name="Shen Z."/>
            <person name="Weber J."/>
            <person name="Frosch M."/>
            <person name="Fox J.G."/>
        </authorList>
    </citation>
    <scope>NUCLEOTIDE SEQUENCE [LARGE SCALE GENOMIC DNA]</scope>
    <source>
        <strain>ATCC 51449 / 3B1</strain>
    </source>
</reference>